<feature type="chain" id="PRO_0000073308" description="ATP synthase gamma chain">
    <location>
        <begin position="1"/>
        <end position="290"/>
    </location>
</feature>
<keyword id="KW-0066">ATP synthesis</keyword>
<keyword id="KW-1003">Cell membrane</keyword>
<keyword id="KW-0139">CF(1)</keyword>
<keyword id="KW-0375">Hydrogen ion transport</keyword>
<keyword id="KW-0406">Ion transport</keyword>
<keyword id="KW-0472">Membrane</keyword>
<keyword id="KW-0813">Transport</keyword>
<proteinExistence type="inferred from homology"/>
<name>ATPG_LISIN</name>
<evidence type="ECO:0000255" key="1">
    <source>
        <dbReference type="HAMAP-Rule" id="MF_00815"/>
    </source>
</evidence>
<organism>
    <name type="scientific">Listeria innocua serovar 6a (strain ATCC BAA-680 / CLIP 11262)</name>
    <dbReference type="NCBI Taxonomy" id="272626"/>
    <lineage>
        <taxon>Bacteria</taxon>
        <taxon>Bacillati</taxon>
        <taxon>Bacillota</taxon>
        <taxon>Bacilli</taxon>
        <taxon>Bacillales</taxon>
        <taxon>Listeriaceae</taxon>
        <taxon>Listeria</taxon>
    </lineage>
</organism>
<sequence>MASLIDIKQRITSTRKTSQITKAMQMVSAAKLGRAESNARSYEPYVSKIKDVVTHVASTGNSSDHPMLVSRPVHRTGYIVLTSDTGLAGSYNSSVIKEVFQEINKKHTSSDEYAIITVGRSARDFFKARQMNVVLEVQGITDHPIFAEIKDIASNTVQMFEDGVYDEVFIYYNHHINSISSELRKEQLLPLTEFHEKGKETDVDLTTYEFEPSEQEILEVLLPQYVESLIFGALLDAKAAEHAARMTAMRSATDNASDLISDLSLQYNRARQAAITQEITEIVGGAAALE</sequence>
<dbReference type="EMBL" id="AL596173">
    <property type="protein sequence ID" value="CAC97900.1"/>
    <property type="molecule type" value="Genomic_DNA"/>
</dbReference>
<dbReference type="RefSeq" id="WP_003723463.1">
    <property type="nucleotide sequence ID" value="NC_003212.1"/>
</dbReference>
<dbReference type="SMR" id="Q7ANV0"/>
<dbReference type="STRING" id="272626.gene:17567054"/>
<dbReference type="KEGG" id="lin:atpG"/>
<dbReference type="eggNOG" id="COG0224">
    <property type="taxonomic scope" value="Bacteria"/>
</dbReference>
<dbReference type="HOGENOM" id="CLU_050669_0_1_9"/>
<dbReference type="OrthoDB" id="9812769at2"/>
<dbReference type="Proteomes" id="UP000002513">
    <property type="component" value="Chromosome"/>
</dbReference>
<dbReference type="GO" id="GO:0005886">
    <property type="term" value="C:plasma membrane"/>
    <property type="evidence" value="ECO:0007669"/>
    <property type="project" value="UniProtKB-SubCell"/>
</dbReference>
<dbReference type="GO" id="GO:0045259">
    <property type="term" value="C:proton-transporting ATP synthase complex"/>
    <property type="evidence" value="ECO:0007669"/>
    <property type="project" value="UniProtKB-KW"/>
</dbReference>
<dbReference type="GO" id="GO:0005524">
    <property type="term" value="F:ATP binding"/>
    <property type="evidence" value="ECO:0007669"/>
    <property type="project" value="UniProtKB-UniRule"/>
</dbReference>
<dbReference type="GO" id="GO:0046933">
    <property type="term" value="F:proton-transporting ATP synthase activity, rotational mechanism"/>
    <property type="evidence" value="ECO:0007669"/>
    <property type="project" value="UniProtKB-UniRule"/>
</dbReference>
<dbReference type="GO" id="GO:0042777">
    <property type="term" value="P:proton motive force-driven plasma membrane ATP synthesis"/>
    <property type="evidence" value="ECO:0007669"/>
    <property type="project" value="UniProtKB-UniRule"/>
</dbReference>
<dbReference type="CDD" id="cd12151">
    <property type="entry name" value="F1-ATPase_gamma"/>
    <property type="match status" value="1"/>
</dbReference>
<dbReference type="FunFam" id="1.10.287.80:FF:000010">
    <property type="entry name" value="ATP synthase gamma chain"/>
    <property type="match status" value="1"/>
</dbReference>
<dbReference type="FunFam" id="3.40.1380.10:FF:000002">
    <property type="entry name" value="ATP synthase gamma chain"/>
    <property type="match status" value="1"/>
</dbReference>
<dbReference type="Gene3D" id="3.40.1380.10">
    <property type="match status" value="1"/>
</dbReference>
<dbReference type="Gene3D" id="1.10.287.80">
    <property type="entry name" value="ATP synthase, gamma subunit, helix hairpin domain"/>
    <property type="match status" value="1"/>
</dbReference>
<dbReference type="HAMAP" id="MF_00815">
    <property type="entry name" value="ATP_synth_gamma_bact"/>
    <property type="match status" value="1"/>
</dbReference>
<dbReference type="InterPro" id="IPR035968">
    <property type="entry name" value="ATP_synth_F1_ATPase_gsu"/>
</dbReference>
<dbReference type="InterPro" id="IPR000131">
    <property type="entry name" value="ATP_synth_F1_gsu"/>
</dbReference>
<dbReference type="InterPro" id="IPR023632">
    <property type="entry name" value="ATP_synth_F1_gsu_CS"/>
</dbReference>
<dbReference type="NCBIfam" id="TIGR01146">
    <property type="entry name" value="ATPsyn_F1gamma"/>
    <property type="match status" value="1"/>
</dbReference>
<dbReference type="NCBIfam" id="NF004147">
    <property type="entry name" value="PRK05621.2-1"/>
    <property type="match status" value="1"/>
</dbReference>
<dbReference type="PANTHER" id="PTHR11693">
    <property type="entry name" value="ATP SYNTHASE GAMMA CHAIN"/>
    <property type="match status" value="1"/>
</dbReference>
<dbReference type="PANTHER" id="PTHR11693:SF22">
    <property type="entry name" value="ATP SYNTHASE SUBUNIT GAMMA, MITOCHONDRIAL"/>
    <property type="match status" value="1"/>
</dbReference>
<dbReference type="Pfam" id="PF00231">
    <property type="entry name" value="ATP-synt"/>
    <property type="match status" value="1"/>
</dbReference>
<dbReference type="PRINTS" id="PR00126">
    <property type="entry name" value="ATPASEGAMMA"/>
</dbReference>
<dbReference type="SUPFAM" id="SSF52943">
    <property type="entry name" value="ATP synthase (F1-ATPase), gamma subunit"/>
    <property type="match status" value="1"/>
</dbReference>
<dbReference type="PROSITE" id="PS00153">
    <property type="entry name" value="ATPASE_GAMMA"/>
    <property type="match status" value="1"/>
</dbReference>
<reference key="1">
    <citation type="journal article" date="2001" name="Science">
        <title>Comparative genomics of Listeria species.</title>
        <authorList>
            <person name="Glaser P."/>
            <person name="Frangeul L."/>
            <person name="Buchrieser C."/>
            <person name="Rusniok C."/>
            <person name="Amend A."/>
            <person name="Baquero F."/>
            <person name="Berche P."/>
            <person name="Bloecker H."/>
            <person name="Brandt P."/>
            <person name="Chakraborty T."/>
            <person name="Charbit A."/>
            <person name="Chetouani F."/>
            <person name="Couve E."/>
            <person name="de Daruvar A."/>
            <person name="Dehoux P."/>
            <person name="Domann E."/>
            <person name="Dominguez-Bernal G."/>
            <person name="Duchaud E."/>
            <person name="Durant L."/>
            <person name="Dussurget O."/>
            <person name="Entian K.-D."/>
            <person name="Fsihi H."/>
            <person name="Garcia-del Portillo F."/>
            <person name="Garrido P."/>
            <person name="Gautier L."/>
            <person name="Goebel W."/>
            <person name="Gomez-Lopez N."/>
            <person name="Hain T."/>
            <person name="Hauf J."/>
            <person name="Jackson D."/>
            <person name="Jones L.-M."/>
            <person name="Kaerst U."/>
            <person name="Kreft J."/>
            <person name="Kuhn M."/>
            <person name="Kunst F."/>
            <person name="Kurapkat G."/>
            <person name="Madueno E."/>
            <person name="Maitournam A."/>
            <person name="Mata Vicente J."/>
            <person name="Ng E."/>
            <person name="Nedjari H."/>
            <person name="Nordsiek G."/>
            <person name="Novella S."/>
            <person name="de Pablos B."/>
            <person name="Perez-Diaz J.-C."/>
            <person name="Purcell R."/>
            <person name="Remmel B."/>
            <person name="Rose M."/>
            <person name="Schlueter T."/>
            <person name="Simoes N."/>
            <person name="Tierrez A."/>
            <person name="Vazquez-Boland J.-A."/>
            <person name="Voss H."/>
            <person name="Wehland J."/>
            <person name="Cossart P."/>
        </authorList>
    </citation>
    <scope>NUCLEOTIDE SEQUENCE [LARGE SCALE GENOMIC DNA]</scope>
    <source>
        <strain>ATCC BAA-680 / CLIP 11262</strain>
    </source>
</reference>
<comment type="function">
    <text evidence="1">Produces ATP from ADP in the presence of a proton gradient across the membrane. The gamma chain is believed to be important in regulating ATPase activity and the flow of protons through the CF(0) complex.</text>
</comment>
<comment type="subunit">
    <text evidence="1">F-type ATPases have 2 components, CF(1) - the catalytic core - and CF(0) - the membrane proton channel. CF(1) has five subunits: alpha(3), beta(3), gamma(1), delta(1), epsilon(1). CF(0) has three main subunits: a, b and c.</text>
</comment>
<comment type="subcellular location">
    <subcellularLocation>
        <location evidence="1">Cell membrane</location>
        <topology evidence="1">Peripheral membrane protein</topology>
    </subcellularLocation>
</comment>
<comment type="similarity">
    <text evidence="1">Belongs to the ATPase gamma chain family.</text>
</comment>
<accession>Q7ANV0</accession>
<gene>
    <name evidence="1" type="primary">atpG</name>
    <name type="ordered locus">lin2674</name>
</gene>
<protein>
    <recommendedName>
        <fullName evidence="1">ATP synthase gamma chain</fullName>
    </recommendedName>
    <alternativeName>
        <fullName evidence="1">ATP synthase F1 sector gamma subunit</fullName>
    </alternativeName>
    <alternativeName>
        <fullName evidence="1">F-ATPase gamma subunit</fullName>
    </alternativeName>
</protein>